<organism>
    <name type="scientific">Variovorax paradoxus (strain S110)</name>
    <dbReference type="NCBI Taxonomy" id="543728"/>
    <lineage>
        <taxon>Bacteria</taxon>
        <taxon>Pseudomonadati</taxon>
        <taxon>Pseudomonadota</taxon>
        <taxon>Betaproteobacteria</taxon>
        <taxon>Burkholderiales</taxon>
        <taxon>Comamonadaceae</taxon>
        <taxon>Variovorax</taxon>
    </lineage>
</organism>
<reference key="1">
    <citation type="journal article" date="2011" name="J. Bacteriol.">
        <title>Complete genome sequence of the metabolically versatile plant growth-promoting endophyte, Variovorax paradoxus S110.</title>
        <authorList>
            <person name="Han J.I."/>
            <person name="Choi H.K."/>
            <person name="Lee S.W."/>
            <person name="Orwin P.M."/>
            <person name="Kim J."/>
            <person name="Laroe S.L."/>
            <person name="Kim T.G."/>
            <person name="O'Neil J."/>
            <person name="Leadbetter J.R."/>
            <person name="Lee S.Y."/>
            <person name="Hur C.G."/>
            <person name="Spain J.C."/>
            <person name="Ovchinnikova G."/>
            <person name="Goodwin L."/>
            <person name="Han C."/>
        </authorList>
    </citation>
    <scope>NUCLEOTIDE SEQUENCE [LARGE SCALE GENOMIC DNA]</scope>
    <source>
        <strain>S110</strain>
    </source>
</reference>
<protein>
    <recommendedName>
        <fullName evidence="1">Transcription antitermination protein NusB</fullName>
    </recommendedName>
    <alternativeName>
        <fullName evidence="1">Antitermination factor NusB</fullName>
    </alternativeName>
</protein>
<gene>
    <name evidence="1" type="primary">nusB</name>
    <name type="ordered locus">Vapar_3112</name>
</gene>
<comment type="function">
    <text evidence="1">Involved in transcription antitermination. Required for transcription of ribosomal RNA (rRNA) genes. Binds specifically to the boxA antiterminator sequence of the ribosomal RNA (rrn) operons.</text>
</comment>
<comment type="similarity">
    <text evidence="1">Belongs to the NusB family.</text>
</comment>
<keyword id="KW-0694">RNA-binding</keyword>
<keyword id="KW-0804">Transcription</keyword>
<keyword id="KW-0889">Transcription antitermination</keyword>
<keyword id="KW-0805">Transcription regulation</keyword>
<proteinExistence type="inferred from homology"/>
<sequence>MTEDNNKAAGAKPRPARQVRTGLTSTGARKASAKSNRSRAREFALQALYQHLVGRNDPTEIDHFTRDLAGFHKADAAHYDALLHGSIEGAEQLDALIRPLLDRKFEEISPIEHAVMWIGVYEFQHCLDVPWRVVLNECIELAKEFGGTDGHKYVNAVLNGLAPQLRAAEVEADRASGKARA</sequence>
<dbReference type="EMBL" id="CP001635">
    <property type="protein sequence ID" value="ACS19731.1"/>
    <property type="molecule type" value="Genomic_DNA"/>
</dbReference>
<dbReference type="SMR" id="C5CPZ2"/>
<dbReference type="STRING" id="543728.Vapar_3112"/>
<dbReference type="KEGG" id="vap:Vapar_3112"/>
<dbReference type="eggNOG" id="COG0781">
    <property type="taxonomic scope" value="Bacteria"/>
</dbReference>
<dbReference type="HOGENOM" id="CLU_087843_4_1_4"/>
<dbReference type="OrthoDB" id="9789556at2"/>
<dbReference type="GO" id="GO:0005829">
    <property type="term" value="C:cytosol"/>
    <property type="evidence" value="ECO:0007669"/>
    <property type="project" value="TreeGrafter"/>
</dbReference>
<dbReference type="GO" id="GO:0003723">
    <property type="term" value="F:RNA binding"/>
    <property type="evidence" value="ECO:0007669"/>
    <property type="project" value="UniProtKB-UniRule"/>
</dbReference>
<dbReference type="GO" id="GO:0006353">
    <property type="term" value="P:DNA-templated transcription termination"/>
    <property type="evidence" value="ECO:0007669"/>
    <property type="project" value="UniProtKB-UniRule"/>
</dbReference>
<dbReference type="GO" id="GO:0031564">
    <property type="term" value="P:transcription antitermination"/>
    <property type="evidence" value="ECO:0007669"/>
    <property type="project" value="UniProtKB-KW"/>
</dbReference>
<dbReference type="Gene3D" id="1.10.940.10">
    <property type="entry name" value="NusB-like"/>
    <property type="match status" value="1"/>
</dbReference>
<dbReference type="HAMAP" id="MF_00073">
    <property type="entry name" value="NusB"/>
    <property type="match status" value="1"/>
</dbReference>
<dbReference type="InterPro" id="IPR035926">
    <property type="entry name" value="NusB-like_sf"/>
</dbReference>
<dbReference type="InterPro" id="IPR011605">
    <property type="entry name" value="NusB_fam"/>
</dbReference>
<dbReference type="InterPro" id="IPR006027">
    <property type="entry name" value="NusB_RsmB_TIM44"/>
</dbReference>
<dbReference type="NCBIfam" id="TIGR01951">
    <property type="entry name" value="nusB"/>
    <property type="match status" value="1"/>
</dbReference>
<dbReference type="PANTHER" id="PTHR11078:SF3">
    <property type="entry name" value="ANTITERMINATION NUSB DOMAIN-CONTAINING PROTEIN"/>
    <property type="match status" value="1"/>
</dbReference>
<dbReference type="PANTHER" id="PTHR11078">
    <property type="entry name" value="N UTILIZATION SUBSTANCE PROTEIN B-RELATED"/>
    <property type="match status" value="1"/>
</dbReference>
<dbReference type="Pfam" id="PF01029">
    <property type="entry name" value="NusB"/>
    <property type="match status" value="1"/>
</dbReference>
<dbReference type="SUPFAM" id="SSF48013">
    <property type="entry name" value="NusB-like"/>
    <property type="match status" value="1"/>
</dbReference>
<evidence type="ECO:0000255" key="1">
    <source>
        <dbReference type="HAMAP-Rule" id="MF_00073"/>
    </source>
</evidence>
<evidence type="ECO:0000256" key="2">
    <source>
        <dbReference type="SAM" id="MobiDB-lite"/>
    </source>
</evidence>
<feature type="chain" id="PRO_1000202494" description="Transcription antitermination protein NusB">
    <location>
        <begin position="1"/>
        <end position="181"/>
    </location>
</feature>
<feature type="region of interest" description="Disordered" evidence="2">
    <location>
        <begin position="1"/>
        <end position="36"/>
    </location>
</feature>
<accession>C5CPZ2</accession>
<name>NUSB_VARPS</name>